<accession>P19124</accession>
<keyword id="KW-0150">Chloroplast</keyword>
<keyword id="KW-0472">Membrane</keyword>
<keyword id="KW-0520">NAD</keyword>
<keyword id="KW-0521">NADP</keyword>
<keyword id="KW-0934">Plastid</keyword>
<keyword id="KW-0618">Plastoquinone</keyword>
<keyword id="KW-0874">Quinone</keyword>
<keyword id="KW-1185">Reference proteome</keyword>
<keyword id="KW-0793">Thylakoid</keyword>
<keyword id="KW-1278">Translocase</keyword>
<keyword id="KW-0813">Transport</keyword>
<geneLocation type="chloroplast"/>
<feature type="chain" id="PRO_0000118655" description="NAD(P)H-quinone oxidoreductase subunit J, chloroplastic">
    <location>
        <begin position="1"/>
        <end position="159"/>
    </location>
</feature>
<dbReference type="EC" id="7.1.1.-" evidence="1"/>
<dbReference type="EMBL" id="X17438">
    <property type="protein sequence ID" value="CAA35483.1"/>
    <property type="molecule type" value="Genomic_DNA"/>
</dbReference>
<dbReference type="EMBL" id="X86563">
    <property type="protein sequence ID" value="CAA60289.1"/>
    <property type="molecule type" value="Genomic_DNA"/>
</dbReference>
<dbReference type="PIR" id="S58555">
    <property type="entry name" value="S58555"/>
</dbReference>
<dbReference type="RefSeq" id="NP_043028.1">
    <property type="nucleotide sequence ID" value="NC_001666.2"/>
</dbReference>
<dbReference type="SMR" id="P19124"/>
<dbReference type="FunCoup" id="P19124">
    <property type="interactions" value="29"/>
</dbReference>
<dbReference type="STRING" id="4577.P19124"/>
<dbReference type="PaxDb" id="4577-GRMZM2G404025_P01"/>
<dbReference type="GeneID" id="845189"/>
<dbReference type="KEGG" id="zma:845189"/>
<dbReference type="MaizeGDB" id="118231"/>
<dbReference type="eggNOG" id="KOG1713">
    <property type="taxonomic scope" value="Eukaryota"/>
</dbReference>
<dbReference type="HOGENOM" id="CLU_042628_9_1_1"/>
<dbReference type="InParanoid" id="P19124"/>
<dbReference type="OrthoDB" id="580589at2759"/>
<dbReference type="Proteomes" id="UP000007305">
    <property type="component" value="Chloroplast"/>
</dbReference>
<dbReference type="GO" id="GO:0009535">
    <property type="term" value="C:chloroplast thylakoid membrane"/>
    <property type="evidence" value="ECO:0007669"/>
    <property type="project" value="UniProtKB-SubCell"/>
</dbReference>
<dbReference type="GO" id="GO:0008137">
    <property type="term" value="F:NADH dehydrogenase (ubiquinone) activity"/>
    <property type="evidence" value="ECO:0007669"/>
    <property type="project" value="InterPro"/>
</dbReference>
<dbReference type="GO" id="GO:0048038">
    <property type="term" value="F:quinone binding"/>
    <property type="evidence" value="ECO:0007669"/>
    <property type="project" value="UniProtKB-KW"/>
</dbReference>
<dbReference type="GO" id="GO:0019684">
    <property type="term" value="P:photosynthesis, light reaction"/>
    <property type="evidence" value="ECO:0007669"/>
    <property type="project" value="UniProtKB-UniRule"/>
</dbReference>
<dbReference type="Gene3D" id="3.30.460.80">
    <property type="entry name" value="NADH:ubiquinone oxidoreductase, 30kDa subunit"/>
    <property type="match status" value="1"/>
</dbReference>
<dbReference type="HAMAP" id="MF_01357">
    <property type="entry name" value="NDH1_NuoC"/>
    <property type="match status" value="1"/>
</dbReference>
<dbReference type="InterPro" id="IPR010218">
    <property type="entry name" value="NADH_DH_suC"/>
</dbReference>
<dbReference type="InterPro" id="IPR037232">
    <property type="entry name" value="NADH_quin_OxRdtase_su_C/D-like"/>
</dbReference>
<dbReference type="InterPro" id="IPR001268">
    <property type="entry name" value="NADH_UbQ_OxRdtase_30kDa_su"/>
</dbReference>
<dbReference type="InterPro" id="IPR020396">
    <property type="entry name" value="NADH_UbQ_OxRdtase_CS"/>
</dbReference>
<dbReference type="NCBIfam" id="NF009141">
    <property type="entry name" value="PRK12494.1"/>
    <property type="match status" value="1"/>
</dbReference>
<dbReference type="PANTHER" id="PTHR10884:SF14">
    <property type="entry name" value="NADH DEHYDROGENASE [UBIQUINONE] IRON-SULFUR PROTEIN 3, MITOCHONDRIAL"/>
    <property type="match status" value="1"/>
</dbReference>
<dbReference type="PANTHER" id="PTHR10884">
    <property type="entry name" value="NADH DEHYDROGENASE UBIQUINONE IRON-SULFUR PROTEIN 3"/>
    <property type="match status" value="1"/>
</dbReference>
<dbReference type="Pfam" id="PF00329">
    <property type="entry name" value="Complex1_30kDa"/>
    <property type="match status" value="1"/>
</dbReference>
<dbReference type="SUPFAM" id="SSF143243">
    <property type="entry name" value="Nqo5-like"/>
    <property type="match status" value="1"/>
</dbReference>
<dbReference type="PROSITE" id="PS00542">
    <property type="entry name" value="COMPLEX1_30K"/>
    <property type="match status" value="1"/>
</dbReference>
<protein>
    <recommendedName>
        <fullName evidence="1">NAD(P)H-quinone oxidoreductase subunit J, chloroplastic</fullName>
        <ecNumber evidence="1">7.1.1.-</ecNumber>
    </recommendedName>
    <alternativeName>
        <fullName>NAD(P)H dehydrogenase subunit J</fullName>
    </alternativeName>
    <alternativeName>
        <fullName evidence="1">NADH-plastoquinone oxidoreductase subunit J</fullName>
    </alternativeName>
</protein>
<organism>
    <name type="scientific">Zea mays</name>
    <name type="common">Maize</name>
    <dbReference type="NCBI Taxonomy" id="4577"/>
    <lineage>
        <taxon>Eukaryota</taxon>
        <taxon>Viridiplantae</taxon>
        <taxon>Streptophyta</taxon>
        <taxon>Embryophyta</taxon>
        <taxon>Tracheophyta</taxon>
        <taxon>Spermatophyta</taxon>
        <taxon>Magnoliopsida</taxon>
        <taxon>Liliopsida</taxon>
        <taxon>Poales</taxon>
        <taxon>Poaceae</taxon>
        <taxon>PACMAD clade</taxon>
        <taxon>Panicoideae</taxon>
        <taxon>Andropogonodae</taxon>
        <taxon>Andropogoneae</taxon>
        <taxon>Tripsacinae</taxon>
        <taxon>Zea</taxon>
    </lineage>
</organism>
<gene>
    <name evidence="1" type="primary">ndhJ</name>
</gene>
<comment type="function">
    <text evidence="1">NDH shuttles electrons from NAD(P)H:plastoquinone, via FMN and iron-sulfur (Fe-S) centers, to quinones in the photosynthetic chain and possibly in a chloroplast respiratory chain. The immediate electron acceptor for the enzyme in this species is believed to be plastoquinone. Couples the redox reaction to proton translocation, and thus conserves the redox energy in a proton gradient.</text>
</comment>
<comment type="catalytic activity">
    <reaction evidence="1">
        <text>a plastoquinone + NADH + (n+1) H(+)(in) = a plastoquinol + NAD(+) + n H(+)(out)</text>
        <dbReference type="Rhea" id="RHEA:42608"/>
        <dbReference type="Rhea" id="RHEA-COMP:9561"/>
        <dbReference type="Rhea" id="RHEA-COMP:9562"/>
        <dbReference type="ChEBI" id="CHEBI:15378"/>
        <dbReference type="ChEBI" id="CHEBI:17757"/>
        <dbReference type="ChEBI" id="CHEBI:57540"/>
        <dbReference type="ChEBI" id="CHEBI:57945"/>
        <dbReference type="ChEBI" id="CHEBI:62192"/>
    </reaction>
</comment>
<comment type="catalytic activity">
    <reaction evidence="1">
        <text>a plastoquinone + NADPH + (n+1) H(+)(in) = a plastoquinol + NADP(+) + n H(+)(out)</text>
        <dbReference type="Rhea" id="RHEA:42612"/>
        <dbReference type="Rhea" id="RHEA-COMP:9561"/>
        <dbReference type="Rhea" id="RHEA-COMP:9562"/>
        <dbReference type="ChEBI" id="CHEBI:15378"/>
        <dbReference type="ChEBI" id="CHEBI:17757"/>
        <dbReference type="ChEBI" id="CHEBI:57783"/>
        <dbReference type="ChEBI" id="CHEBI:58349"/>
        <dbReference type="ChEBI" id="CHEBI:62192"/>
    </reaction>
</comment>
<comment type="subunit">
    <text evidence="1">NDH is composed of at least 16 different subunits, 5 of which are encoded in the nucleus.</text>
</comment>
<comment type="subcellular location">
    <subcellularLocation>
        <location evidence="1">Plastid</location>
        <location evidence="1">Chloroplast thylakoid membrane</location>
        <topology evidence="1">Peripheral membrane protein</topology>
        <orientation evidence="1">Stromal side</orientation>
    </subcellularLocation>
</comment>
<comment type="tissue specificity">
    <text>Leaves.</text>
</comment>
<comment type="similarity">
    <text evidence="1">Belongs to the complex I 30 kDa subunit family.</text>
</comment>
<evidence type="ECO:0000255" key="1">
    <source>
        <dbReference type="HAMAP-Rule" id="MF_01357"/>
    </source>
</evidence>
<name>NDHJ_MAIZE</name>
<proteinExistence type="evidence at transcript level"/>
<sequence>MQQGWLSNWLVKHDVVHRSLGFDHRGVETLQIKAGDWDSIAVILYVYGYNYLRSQCAYDVAPGGSLASVYHLTRIQYGIDNPEEVCIKVFAQKDNPRIPSVFWVWRSADFQERESYDMVGISYDNHPRLKRILMPESWIGWPLRKDYITPNFYEIQDAH</sequence>
<reference key="1">
    <citation type="journal article" date="1989" name="Mol. Gen. Genet.">
        <title>Characterization of the ndhC-psbG-ORF157/159 operon of maize plastid DNA and of the cyanobacterium Synechocystis sp. PCC6803.</title>
        <authorList>
            <person name="Steinmueller K."/>
            <person name="Ley A.C."/>
            <person name="Steinmetz A.A."/>
            <person name="Sayre R.T."/>
            <person name="Bogorad L."/>
        </authorList>
    </citation>
    <scope>NUCLEOTIDE SEQUENCE [LARGE SCALE GENOMIC DNA]</scope>
    <source>
        <strain>cv. B73</strain>
    </source>
</reference>
<reference key="2">
    <citation type="journal article" date="1995" name="J. Mol. Biol.">
        <title>Complete sequence of the maize chloroplast genome: gene content, hotspots of divergence and fine tuning of genetic information by transcript editing.</title>
        <authorList>
            <person name="Maier R.M."/>
            <person name="Neckermann K."/>
            <person name="Igloi G.L."/>
            <person name="Koessel H."/>
        </authorList>
    </citation>
    <scope>NUCLEOTIDE SEQUENCE [LARGE SCALE GENOMIC DNA]</scope>
    <source>
        <strain>cv. B73</strain>
    </source>
</reference>